<keyword id="KW-1185">Reference proteome</keyword>
<keyword id="KW-0786">Thiamine pyrophosphate</keyword>
<keyword id="KW-0808">Transferase</keyword>
<comment type="catalytic activity">
    <reaction>
        <text>D-sedoheptulose 7-phosphate + D-glyceraldehyde 3-phosphate = aldehydo-D-ribose 5-phosphate + D-xylulose 5-phosphate</text>
        <dbReference type="Rhea" id="RHEA:10508"/>
        <dbReference type="ChEBI" id="CHEBI:57483"/>
        <dbReference type="ChEBI" id="CHEBI:57737"/>
        <dbReference type="ChEBI" id="CHEBI:58273"/>
        <dbReference type="ChEBI" id="CHEBI:59776"/>
        <dbReference type="EC" id="2.2.1.1"/>
    </reaction>
</comment>
<comment type="cofactor">
    <cofactor evidence="1">
        <name>thiamine diphosphate</name>
        <dbReference type="ChEBI" id="CHEBI:58937"/>
    </cofactor>
    <text evidence="1">Binds 1 thiamine pyrophosphate per subunit.</text>
</comment>
<comment type="similarity">
    <text evidence="2">Belongs to the transketolase family.</text>
</comment>
<comment type="caution">
    <text evidence="2">Could be the product of a pseudogene. Corresponds to the C-terminal of members of this family.</text>
</comment>
<reference key="1">
    <citation type="journal article" date="1996" name="Science">
        <title>Complete genome sequence of the methanogenic archaeon, Methanococcus jannaschii.</title>
        <authorList>
            <person name="Bult C.J."/>
            <person name="White O."/>
            <person name="Olsen G.J."/>
            <person name="Zhou L."/>
            <person name="Fleischmann R.D."/>
            <person name="Sutton G.G."/>
            <person name="Blake J.A."/>
            <person name="FitzGerald L.M."/>
            <person name="Clayton R.A."/>
            <person name="Gocayne J.D."/>
            <person name="Kerlavage A.R."/>
            <person name="Dougherty B.A."/>
            <person name="Tomb J.-F."/>
            <person name="Adams M.D."/>
            <person name="Reich C.I."/>
            <person name="Overbeek R."/>
            <person name="Kirkness E.F."/>
            <person name="Weinstock K.G."/>
            <person name="Merrick J.M."/>
            <person name="Glodek A."/>
            <person name="Scott J.L."/>
            <person name="Geoghagen N.S.M."/>
            <person name="Weidman J.F."/>
            <person name="Fuhrmann J.L."/>
            <person name="Nguyen D."/>
            <person name="Utterback T.R."/>
            <person name="Kelley J.M."/>
            <person name="Peterson J.D."/>
            <person name="Sadow P.W."/>
            <person name="Hanna M.C."/>
            <person name="Cotton M.D."/>
            <person name="Roberts K.M."/>
            <person name="Hurst M.A."/>
            <person name="Kaine B.P."/>
            <person name="Borodovsky M."/>
            <person name="Klenk H.-P."/>
            <person name="Fraser C.M."/>
            <person name="Smith H.O."/>
            <person name="Woese C.R."/>
            <person name="Venter J.C."/>
        </authorList>
    </citation>
    <scope>NUCLEOTIDE SEQUENCE [LARGE SCALE GENOMIC DNA]</scope>
    <source>
        <strain>ATCC 43067 / DSM 2661 / JAL-1 / JCM 10045 / NBRC 100440</strain>
    </source>
</reference>
<feature type="chain" id="PRO_0000191915" description="Putative transketolase C-terminal section">
    <location>
        <begin position="1"/>
        <end position="316"/>
    </location>
</feature>
<name>TKTC_METJA</name>
<dbReference type="EC" id="2.2.1.1"/>
<dbReference type="EMBL" id="L77117">
    <property type="protein sequence ID" value="AAB98674.1"/>
    <property type="molecule type" value="Genomic_DNA"/>
</dbReference>
<dbReference type="PIR" id="G64384">
    <property type="entry name" value="G64384"/>
</dbReference>
<dbReference type="RefSeq" id="WP_010870184.1">
    <property type="nucleotide sequence ID" value="NC_000909.1"/>
</dbReference>
<dbReference type="SMR" id="Q58092"/>
<dbReference type="FunCoup" id="Q58092">
    <property type="interactions" value="196"/>
</dbReference>
<dbReference type="STRING" id="243232.MJ_0679"/>
<dbReference type="PaxDb" id="243232-MJ_0679"/>
<dbReference type="EnsemblBacteria" id="AAB98674">
    <property type="protein sequence ID" value="AAB98674"/>
    <property type="gene ID" value="MJ_0679"/>
</dbReference>
<dbReference type="GeneID" id="1451545"/>
<dbReference type="KEGG" id="mja:MJ_0679"/>
<dbReference type="eggNOG" id="arCOG01051">
    <property type="taxonomic scope" value="Archaea"/>
</dbReference>
<dbReference type="HOGENOM" id="CLU_009227_1_1_2"/>
<dbReference type="InParanoid" id="Q58092"/>
<dbReference type="OrthoDB" id="6779at2157"/>
<dbReference type="PhylomeDB" id="Q58092"/>
<dbReference type="Proteomes" id="UP000000805">
    <property type="component" value="Chromosome"/>
</dbReference>
<dbReference type="GO" id="GO:0004802">
    <property type="term" value="F:transketolase activity"/>
    <property type="evidence" value="ECO:0007669"/>
    <property type="project" value="UniProtKB-EC"/>
</dbReference>
<dbReference type="GO" id="GO:0006082">
    <property type="term" value="P:organic acid metabolic process"/>
    <property type="evidence" value="ECO:0007669"/>
    <property type="project" value="UniProtKB-ARBA"/>
</dbReference>
<dbReference type="GO" id="GO:0044272">
    <property type="term" value="P:sulfur compound biosynthetic process"/>
    <property type="evidence" value="ECO:0007669"/>
    <property type="project" value="UniProtKB-ARBA"/>
</dbReference>
<dbReference type="CDD" id="cd07033">
    <property type="entry name" value="TPP_PYR_DXS_TK_like"/>
    <property type="match status" value="1"/>
</dbReference>
<dbReference type="FunFam" id="3.40.50.970:FF:000129">
    <property type="entry name" value="Transketolase"/>
    <property type="match status" value="1"/>
</dbReference>
<dbReference type="Gene3D" id="3.40.50.920">
    <property type="match status" value="1"/>
</dbReference>
<dbReference type="Gene3D" id="3.40.50.970">
    <property type="match status" value="1"/>
</dbReference>
<dbReference type="InterPro" id="IPR051157">
    <property type="entry name" value="PDH/Transketolase"/>
</dbReference>
<dbReference type="InterPro" id="IPR029061">
    <property type="entry name" value="THDP-binding"/>
</dbReference>
<dbReference type="InterPro" id="IPR009014">
    <property type="entry name" value="Transketo_C/PFOR_II"/>
</dbReference>
<dbReference type="InterPro" id="IPR005475">
    <property type="entry name" value="Transketolase-like_Pyr-bd"/>
</dbReference>
<dbReference type="InterPro" id="IPR020826">
    <property type="entry name" value="Transketolase_BS"/>
</dbReference>
<dbReference type="InterPro" id="IPR033248">
    <property type="entry name" value="Transketolase_C"/>
</dbReference>
<dbReference type="PANTHER" id="PTHR43825">
    <property type="entry name" value="PYRUVATE DEHYDROGENASE E1 COMPONENT"/>
    <property type="match status" value="1"/>
</dbReference>
<dbReference type="PANTHER" id="PTHR43825:SF1">
    <property type="entry name" value="TRANSKETOLASE-LIKE PYRIMIDINE-BINDING DOMAIN-CONTAINING PROTEIN"/>
    <property type="match status" value="1"/>
</dbReference>
<dbReference type="Pfam" id="PF02779">
    <property type="entry name" value="Transket_pyr"/>
    <property type="match status" value="1"/>
</dbReference>
<dbReference type="Pfam" id="PF02780">
    <property type="entry name" value="Transketolase_C"/>
    <property type="match status" value="1"/>
</dbReference>
<dbReference type="SMART" id="SM00861">
    <property type="entry name" value="Transket_pyr"/>
    <property type="match status" value="1"/>
</dbReference>
<dbReference type="SUPFAM" id="SSF52518">
    <property type="entry name" value="Thiamin diphosphate-binding fold (THDP-binding)"/>
    <property type="match status" value="1"/>
</dbReference>
<dbReference type="SUPFAM" id="SSF52922">
    <property type="entry name" value="TK C-terminal domain-like"/>
    <property type="match status" value="1"/>
</dbReference>
<dbReference type="PROSITE" id="PS00802">
    <property type="entry name" value="TRANSKETOLASE_2"/>
    <property type="match status" value="1"/>
</dbReference>
<sequence length="316" mass="34580">MVKLSGVYKGMRKGYGETLIELGKKYENLVVLDADLSGSTQTAMFAKEFPERFFNAGVAEQNMIGMAAGLATTGKIVFASSFSMFASGRAWEIIRNLVAYPKLNVKIVATHAGITVGEDGASHQMCEDIAIMRAIPNMVVIAPTDYYHTKNVIRTIAEYKGPVYVRMPRRDTEIIYENEEEATFEIGKGKILVDGEDLTIIATGEEVPEALRAGEILKENGISAEIVEMATIKPIDEEIIKKSKDFVVTVEDHSIIGGLGGAVAEVIASNGLNKKLLRIGINDVFGRSGKADELLKYYGLDGESIAKRIMEEMKKE</sequence>
<evidence type="ECO:0000250" key="1"/>
<evidence type="ECO:0000305" key="2"/>
<accession>Q58092</accession>
<organism>
    <name type="scientific">Methanocaldococcus jannaschii (strain ATCC 43067 / DSM 2661 / JAL-1 / JCM 10045 / NBRC 100440)</name>
    <name type="common">Methanococcus jannaschii</name>
    <dbReference type="NCBI Taxonomy" id="243232"/>
    <lineage>
        <taxon>Archaea</taxon>
        <taxon>Methanobacteriati</taxon>
        <taxon>Methanobacteriota</taxon>
        <taxon>Methanomada group</taxon>
        <taxon>Methanococci</taxon>
        <taxon>Methanococcales</taxon>
        <taxon>Methanocaldococcaceae</taxon>
        <taxon>Methanocaldococcus</taxon>
    </lineage>
</organism>
<protein>
    <recommendedName>
        <fullName>Putative transketolase C-terminal section</fullName>
        <shortName>TK</shortName>
        <ecNumber>2.2.1.1</ecNumber>
    </recommendedName>
</protein>
<gene>
    <name type="ordered locus">MJ0679</name>
</gene>
<proteinExistence type="uncertain"/>